<reference key="1">
    <citation type="journal article" date="1999" name="Nature">
        <title>Sequence and analysis of chromosome 4 of the plant Arabidopsis thaliana.</title>
        <authorList>
            <person name="Mayer K.F.X."/>
            <person name="Schueller C."/>
            <person name="Wambutt R."/>
            <person name="Murphy G."/>
            <person name="Volckaert G."/>
            <person name="Pohl T."/>
            <person name="Duesterhoeft A."/>
            <person name="Stiekema W."/>
            <person name="Entian K.-D."/>
            <person name="Terryn N."/>
            <person name="Harris B."/>
            <person name="Ansorge W."/>
            <person name="Brandt P."/>
            <person name="Grivell L.A."/>
            <person name="Rieger M."/>
            <person name="Weichselgartner M."/>
            <person name="de Simone V."/>
            <person name="Obermaier B."/>
            <person name="Mache R."/>
            <person name="Mueller M."/>
            <person name="Kreis M."/>
            <person name="Delseny M."/>
            <person name="Puigdomenech P."/>
            <person name="Watson M."/>
            <person name="Schmidtheini T."/>
            <person name="Reichert B."/>
            <person name="Portetelle D."/>
            <person name="Perez-Alonso M."/>
            <person name="Boutry M."/>
            <person name="Bancroft I."/>
            <person name="Vos P."/>
            <person name="Hoheisel J."/>
            <person name="Zimmermann W."/>
            <person name="Wedler H."/>
            <person name="Ridley P."/>
            <person name="Langham S.-A."/>
            <person name="McCullagh B."/>
            <person name="Bilham L."/>
            <person name="Robben J."/>
            <person name="van der Schueren J."/>
            <person name="Grymonprez B."/>
            <person name="Chuang Y.-J."/>
            <person name="Vandenbussche F."/>
            <person name="Braeken M."/>
            <person name="Weltjens I."/>
            <person name="Voet M."/>
            <person name="Bastiaens I."/>
            <person name="Aert R."/>
            <person name="Defoor E."/>
            <person name="Weitzenegger T."/>
            <person name="Bothe G."/>
            <person name="Ramsperger U."/>
            <person name="Hilbert H."/>
            <person name="Braun M."/>
            <person name="Holzer E."/>
            <person name="Brandt A."/>
            <person name="Peters S."/>
            <person name="van Staveren M."/>
            <person name="Dirkse W."/>
            <person name="Mooijman P."/>
            <person name="Klein Lankhorst R."/>
            <person name="Rose M."/>
            <person name="Hauf J."/>
            <person name="Koetter P."/>
            <person name="Berneiser S."/>
            <person name="Hempel S."/>
            <person name="Feldpausch M."/>
            <person name="Lamberth S."/>
            <person name="Van den Daele H."/>
            <person name="De Keyser A."/>
            <person name="Buysshaert C."/>
            <person name="Gielen J."/>
            <person name="Villarroel R."/>
            <person name="De Clercq R."/>
            <person name="van Montagu M."/>
            <person name="Rogers J."/>
            <person name="Cronin A."/>
            <person name="Quail M.A."/>
            <person name="Bray-Allen S."/>
            <person name="Clark L."/>
            <person name="Doggett J."/>
            <person name="Hall S."/>
            <person name="Kay M."/>
            <person name="Lennard N."/>
            <person name="McLay K."/>
            <person name="Mayes R."/>
            <person name="Pettett A."/>
            <person name="Rajandream M.A."/>
            <person name="Lyne M."/>
            <person name="Benes V."/>
            <person name="Rechmann S."/>
            <person name="Borkova D."/>
            <person name="Bloecker H."/>
            <person name="Scharfe M."/>
            <person name="Grimm M."/>
            <person name="Loehnert T.-H."/>
            <person name="Dose S."/>
            <person name="de Haan M."/>
            <person name="Maarse A.C."/>
            <person name="Schaefer M."/>
            <person name="Mueller-Auer S."/>
            <person name="Gabel C."/>
            <person name="Fuchs M."/>
            <person name="Fartmann B."/>
            <person name="Granderath K."/>
            <person name="Dauner D."/>
            <person name="Herzl A."/>
            <person name="Neumann S."/>
            <person name="Argiriou A."/>
            <person name="Vitale D."/>
            <person name="Liguori R."/>
            <person name="Piravandi E."/>
            <person name="Massenet O."/>
            <person name="Quigley F."/>
            <person name="Clabauld G."/>
            <person name="Muendlein A."/>
            <person name="Felber R."/>
            <person name="Schnabl S."/>
            <person name="Hiller R."/>
            <person name="Schmidt W."/>
            <person name="Lecharny A."/>
            <person name="Aubourg S."/>
            <person name="Chefdor F."/>
            <person name="Cooke R."/>
            <person name="Berger C."/>
            <person name="Monfort A."/>
            <person name="Casacuberta E."/>
            <person name="Gibbons T."/>
            <person name="Weber N."/>
            <person name="Vandenbol M."/>
            <person name="Bargues M."/>
            <person name="Terol J."/>
            <person name="Torres A."/>
            <person name="Perez-Perez A."/>
            <person name="Purnelle B."/>
            <person name="Bent E."/>
            <person name="Johnson S."/>
            <person name="Tacon D."/>
            <person name="Jesse T."/>
            <person name="Heijnen L."/>
            <person name="Schwarz S."/>
            <person name="Scholler P."/>
            <person name="Heber S."/>
            <person name="Francs P."/>
            <person name="Bielke C."/>
            <person name="Frishman D."/>
            <person name="Haase D."/>
            <person name="Lemcke K."/>
            <person name="Mewes H.-W."/>
            <person name="Stocker S."/>
            <person name="Zaccaria P."/>
            <person name="Bevan M."/>
            <person name="Wilson R.K."/>
            <person name="de la Bastide M."/>
            <person name="Habermann K."/>
            <person name="Parnell L."/>
            <person name="Dedhia N."/>
            <person name="Gnoj L."/>
            <person name="Schutz K."/>
            <person name="Huang E."/>
            <person name="Spiegel L."/>
            <person name="Sekhon M."/>
            <person name="Murray J."/>
            <person name="Sheet P."/>
            <person name="Cordes M."/>
            <person name="Abu-Threideh J."/>
            <person name="Stoneking T."/>
            <person name="Kalicki J."/>
            <person name="Graves T."/>
            <person name="Harmon G."/>
            <person name="Edwards J."/>
            <person name="Latreille P."/>
            <person name="Courtney L."/>
            <person name="Cloud J."/>
            <person name="Abbott A."/>
            <person name="Scott K."/>
            <person name="Johnson D."/>
            <person name="Minx P."/>
            <person name="Bentley D."/>
            <person name="Fulton B."/>
            <person name="Miller N."/>
            <person name="Greco T."/>
            <person name="Kemp K."/>
            <person name="Kramer J."/>
            <person name="Fulton L."/>
            <person name="Mardis E."/>
            <person name="Dante M."/>
            <person name="Pepin K."/>
            <person name="Hillier L.W."/>
            <person name="Nelson J."/>
            <person name="Spieth J."/>
            <person name="Ryan E."/>
            <person name="Andrews S."/>
            <person name="Geisel C."/>
            <person name="Layman D."/>
            <person name="Du H."/>
            <person name="Ali J."/>
            <person name="Berghoff A."/>
            <person name="Jones K."/>
            <person name="Drone K."/>
            <person name="Cotton M."/>
            <person name="Joshu C."/>
            <person name="Antonoiu B."/>
            <person name="Zidanic M."/>
            <person name="Strong C."/>
            <person name="Sun H."/>
            <person name="Lamar B."/>
            <person name="Yordan C."/>
            <person name="Ma P."/>
            <person name="Zhong J."/>
            <person name="Preston R."/>
            <person name="Vil D."/>
            <person name="Shekher M."/>
            <person name="Matero A."/>
            <person name="Shah R."/>
            <person name="Swaby I.K."/>
            <person name="O'Shaughnessy A."/>
            <person name="Rodriguez M."/>
            <person name="Hoffman J."/>
            <person name="Till S."/>
            <person name="Granat S."/>
            <person name="Shohdy N."/>
            <person name="Hasegawa A."/>
            <person name="Hameed A."/>
            <person name="Lodhi M."/>
            <person name="Johnson A."/>
            <person name="Chen E."/>
            <person name="Marra M.A."/>
            <person name="Martienssen R."/>
            <person name="McCombie W.R."/>
        </authorList>
    </citation>
    <scope>NUCLEOTIDE SEQUENCE [LARGE SCALE GENOMIC DNA]</scope>
    <source>
        <strain>cv. Columbia</strain>
    </source>
</reference>
<reference key="2">
    <citation type="journal article" date="2017" name="Plant J.">
        <title>Araport11: a complete reannotation of the Arabidopsis thaliana reference genome.</title>
        <authorList>
            <person name="Cheng C.Y."/>
            <person name="Krishnakumar V."/>
            <person name="Chan A.P."/>
            <person name="Thibaud-Nissen F."/>
            <person name="Schobel S."/>
            <person name="Town C.D."/>
        </authorList>
    </citation>
    <scope>GENOME REANNOTATION</scope>
    <source>
        <strain>cv. Columbia</strain>
    </source>
</reference>
<reference key="3">
    <citation type="journal article" date="2002" name="Science">
        <title>Functional annotation of a full-length Arabidopsis cDNA collection.</title>
        <authorList>
            <person name="Seki M."/>
            <person name="Narusaka M."/>
            <person name="Kamiya A."/>
            <person name="Ishida J."/>
            <person name="Satou M."/>
            <person name="Sakurai T."/>
            <person name="Nakajima M."/>
            <person name="Enju A."/>
            <person name="Akiyama K."/>
            <person name="Oono Y."/>
            <person name="Muramatsu M."/>
            <person name="Hayashizaki Y."/>
            <person name="Kawai J."/>
            <person name="Carninci P."/>
            <person name="Itoh M."/>
            <person name="Ishii Y."/>
            <person name="Arakawa T."/>
            <person name="Shibata K."/>
            <person name="Shinagawa A."/>
            <person name="Shinozaki K."/>
        </authorList>
    </citation>
    <scope>NUCLEOTIDE SEQUENCE [LARGE SCALE MRNA] OF 670-990</scope>
    <source>
        <strain>cv. Columbia</strain>
    </source>
</reference>
<reference key="4">
    <citation type="journal article" date="2000" name="Trends Plant Sci.">
        <title>F-box proteins in Arabidopsis.</title>
        <authorList>
            <person name="Xiao W."/>
            <person name="Jang J.-C."/>
        </authorList>
    </citation>
    <scope>GENE FAMILY</scope>
    <scope>NOMENCLATURE</scope>
</reference>
<evidence type="ECO:0000255" key="1">
    <source>
        <dbReference type="PROSITE-ProRule" id="PRU00080"/>
    </source>
</evidence>
<evidence type="ECO:0000305" key="2"/>
<gene>
    <name type="primary">FBL15</name>
    <name type="ordered locus">At4g33210</name>
    <name type="ORF">F4I10.140</name>
</gene>
<protein>
    <recommendedName>
        <fullName>F-box/LRR-repeat protein 15</fullName>
    </recommendedName>
</protein>
<proteinExistence type="evidence at transcript level"/>
<organism>
    <name type="scientific">Arabidopsis thaliana</name>
    <name type="common">Mouse-ear cress</name>
    <dbReference type="NCBI Taxonomy" id="3702"/>
    <lineage>
        <taxon>Eukaryota</taxon>
        <taxon>Viridiplantae</taxon>
        <taxon>Streptophyta</taxon>
        <taxon>Embryophyta</taxon>
        <taxon>Tracheophyta</taxon>
        <taxon>Spermatophyta</taxon>
        <taxon>Magnoliopsida</taxon>
        <taxon>eudicotyledons</taxon>
        <taxon>Gunneridae</taxon>
        <taxon>Pentapetalae</taxon>
        <taxon>rosids</taxon>
        <taxon>malvids</taxon>
        <taxon>Brassicales</taxon>
        <taxon>Brassicaceae</taxon>
        <taxon>Camelineae</taxon>
        <taxon>Arabidopsis</taxon>
    </lineage>
</organism>
<accession>Q9SMY8</accession>
<accession>Q8GY34</accession>
<dbReference type="EMBL" id="AL035525">
    <property type="protein sequence ID" value="CAB36795.1"/>
    <property type="status" value="ALT_SEQ"/>
    <property type="molecule type" value="Genomic_DNA"/>
</dbReference>
<dbReference type="EMBL" id="AL161583">
    <property type="protein sequence ID" value="CAB80038.1"/>
    <property type="status" value="ALT_SEQ"/>
    <property type="molecule type" value="Genomic_DNA"/>
</dbReference>
<dbReference type="EMBL" id="CP002687">
    <property type="protein sequence ID" value="AEE86191.1"/>
    <property type="molecule type" value="Genomic_DNA"/>
</dbReference>
<dbReference type="EMBL" id="AK117894">
    <property type="protein sequence ID" value="BAC42533.1"/>
    <property type="status" value="ALT_INIT"/>
    <property type="molecule type" value="mRNA"/>
</dbReference>
<dbReference type="PIR" id="T05201">
    <property type="entry name" value="T05201"/>
</dbReference>
<dbReference type="RefSeq" id="NP_567916.2">
    <property type="nucleotide sequence ID" value="NM_119475.3"/>
</dbReference>
<dbReference type="SMR" id="Q9SMY8"/>
<dbReference type="BioGRID" id="14742">
    <property type="interactions" value="1"/>
</dbReference>
<dbReference type="FunCoup" id="Q9SMY8">
    <property type="interactions" value="2161"/>
</dbReference>
<dbReference type="IntAct" id="Q9SMY8">
    <property type="interactions" value="1"/>
</dbReference>
<dbReference type="STRING" id="3702.Q9SMY8"/>
<dbReference type="iPTMnet" id="Q9SMY8"/>
<dbReference type="PaxDb" id="3702-AT4G33210.1"/>
<dbReference type="ProteomicsDB" id="222498"/>
<dbReference type="EnsemblPlants" id="AT4G33210.1">
    <property type="protein sequence ID" value="AT4G33210.1"/>
    <property type="gene ID" value="AT4G33210"/>
</dbReference>
<dbReference type="GeneID" id="829457"/>
<dbReference type="Gramene" id="AT4G33210.1">
    <property type="protein sequence ID" value="AT4G33210.1"/>
    <property type="gene ID" value="AT4G33210"/>
</dbReference>
<dbReference type="KEGG" id="ath:AT4G33210"/>
<dbReference type="Araport" id="AT4G33210"/>
<dbReference type="TAIR" id="AT4G33210">
    <property type="gene designation" value="SLOMO"/>
</dbReference>
<dbReference type="eggNOG" id="KOG1947">
    <property type="taxonomic scope" value="Eukaryota"/>
</dbReference>
<dbReference type="HOGENOM" id="CLU_006638_0_0_1"/>
<dbReference type="InParanoid" id="Q9SMY8"/>
<dbReference type="OMA" id="ACANLHI"/>
<dbReference type="PhylomeDB" id="Q9SMY8"/>
<dbReference type="PRO" id="PR:Q9SMY8"/>
<dbReference type="Proteomes" id="UP000006548">
    <property type="component" value="Chromosome 4"/>
</dbReference>
<dbReference type="ExpressionAtlas" id="Q9SMY8">
    <property type="expression patterns" value="baseline and differential"/>
</dbReference>
<dbReference type="GO" id="GO:1905393">
    <property type="term" value="P:plant organ formation"/>
    <property type="evidence" value="ECO:0000315"/>
    <property type="project" value="TAIR"/>
</dbReference>
<dbReference type="CDD" id="cd22109">
    <property type="entry name" value="F-box_FBXO41"/>
    <property type="match status" value="1"/>
</dbReference>
<dbReference type="FunFam" id="3.80.10.10:FF:000357">
    <property type="entry name" value="F-box/LRR-repeat protein 15"/>
    <property type="match status" value="1"/>
</dbReference>
<dbReference type="FunFam" id="3.80.10.10:FF:000648">
    <property type="entry name" value="F-box/LRR-repeat protein 15"/>
    <property type="match status" value="1"/>
</dbReference>
<dbReference type="FunFam" id="3.80.10.10:FF:000767">
    <property type="entry name" value="F-box/LRR-repeat protein 15"/>
    <property type="match status" value="1"/>
</dbReference>
<dbReference type="FunFam" id="3.80.10.10:FF:001382">
    <property type="entry name" value="F-box/LRR-repeat protein 15"/>
    <property type="match status" value="1"/>
</dbReference>
<dbReference type="FunFam" id="3.80.10.10:FF:000605">
    <property type="entry name" value="F-box/LRR-repeat protein 15 isoform C"/>
    <property type="match status" value="1"/>
</dbReference>
<dbReference type="Gene3D" id="3.80.10.10">
    <property type="entry name" value="Ribonuclease Inhibitor"/>
    <property type="match status" value="5"/>
</dbReference>
<dbReference type="InterPro" id="IPR036047">
    <property type="entry name" value="F-box-like_dom_sf"/>
</dbReference>
<dbReference type="InterPro" id="IPR001810">
    <property type="entry name" value="F-box_dom"/>
</dbReference>
<dbReference type="InterPro" id="IPR055312">
    <property type="entry name" value="FBL15-like"/>
</dbReference>
<dbReference type="InterPro" id="IPR006553">
    <property type="entry name" value="Leu-rich_rpt_Cys-con_subtyp"/>
</dbReference>
<dbReference type="InterPro" id="IPR032675">
    <property type="entry name" value="LRR_dom_sf"/>
</dbReference>
<dbReference type="InterPro" id="IPR055411">
    <property type="entry name" value="LRR_FXL15/At3g58940/PEG3-like"/>
</dbReference>
<dbReference type="PANTHER" id="PTHR34709:SF57">
    <property type="entry name" value="F-BOX DOMAIN-CONTAINING PROTEIN"/>
    <property type="match status" value="1"/>
</dbReference>
<dbReference type="PANTHER" id="PTHR34709">
    <property type="entry name" value="OS10G0396666 PROTEIN"/>
    <property type="match status" value="1"/>
</dbReference>
<dbReference type="Pfam" id="PF12937">
    <property type="entry name" value="F-box-like"/>
    <property type="match status" value="1"/>
</dbReference>
<dbReference type="Pfam" id="PF24758">
    <property type="entry name" value="LRR_At5g56370"/>
    <property type="match status" value="1"/>
</dbReference>
<dbReference type="SMART" id="SM00256">
    <property type="entry name" value="FBOX"/>
    <property type="match status" value="1"/>
</dbReference>
<dbReference type="SMART" id="SM00367">
    <property type="entry name" value="LRR_CC"/>
    <property type="match status" value="12"/>
</dbReference>
<dbReference type="SUPFAM" id="SSF81383">
    <property type="entry name" value="F-box domain"/>
    <property type="match status" value="1"/>
</dbReference>
<dbReference type="SUPFAM" id="SSF52058">
    <property type="entry name" value="L domain-like"/>
    <property type="match status" value="2"/>
</dbReference>
<dbReference type="PROSITE" id="PS50181">
    <property type="entry name" value="FBOX"/>
    <property type="match status" value="1"/>
</dbReference>
<feature type="chain" id="PRO_0000272255" description="F-box/LRR-repeat protein 15">
    <location>
        <begin position="1"/>
        <end position="990"/>
    </location>
</feature>
<feature type="domain" description="F-box" evidence="1">
    <location>
        <begin position="190"/>
        <end position="236"/>
    </location>
</feature>
<feature type="repeat" description="LRR 1">
    <location>
        <begin position="237"/>
        <end position="258"/>
    </location>
</feature>
<feature type="repeat" description="LRR 2">
    <location>
        <begin position="280"/>
        <end position="303"/>
    </location>
</feature>
<feature type="repeat" description="LRR 3">
    <location>
        <begin position="317"/>
        <end position="341"/>
    </location>
</feature>
<feature type="repeat" description="LRR 4">
    <location>
        <begin position="348"/>
        <end position="373"/>
    </location>
</feature>
<feature type="repeat" description="LRR 5">
    <location>
        <begin position="397"/>
        <end position="423"/>
    </location>
</feature>
<feature type="repeat" description="LRR 6">
    <location>
        <begin position="441"/>
        <end position="465"/>
    </location>
</feature>
<feature type="repeat" description="LRR 7">
    <location>
        <begin position="466"/>
        <end position="477"/>
    </location>
</feature>
<feature type="repeat" description="LRR 8">
    <location>
        <begin position="478"/>
        <end position="503"/>
    </location>
</feature>
<feature type="repeat" description="LRR 9">
    <location>
        <begin position="519"/>
        <end position="542"/>
    </location>
</feature>
<feature type="repeat" description="LRR 10">
    <location>
        <begin position="550"/>
        <end position="574"/>
    </location>
</feature>
<feature type="repeat" description="LRR 11">
    <location>
        <begin position="589"/>
        <end position="612"/>
    </location>
</feature>
<feature type="repeat" description="LRR 12">
    <location>
        <begin position="614"/>
        <end position="633"/>
    </location>
</feature>
<feature type="repeat" description="LRR 13">
    <location>
        <begin position="640"/>
        <end position="652"/>
    </location>
</feature>
<feature type="repeat" description="LRR 14">
    <location>
        <begin position="653"/>
        <end position="678"/>
    </location>
</feature>
<feature type="repeat" description="LRR 15">
    <location>
        <begin position="734"/>
        <end position="756"/>
    </location>
</feature>
<feature type="repeat" description="LRR 16">
    <location>
        <begin position="758"/>
        <end position="782"/>
    </location>
</feature>
<feature type="repeat" description="LRR 17">
    <location>
        <begin position="785"/>
        <end position="809"/>
    </location>
</feature>
<feature type="repeat" description="LRR 18">
    <location>
        <begin position="813"/>
        <end position="839"/>
    </location>
</feature>
<feature type="repeat" description="LRR 19">
    <location>
        <begin position="882"/>
        <end position="893"/>
    </location>
</feature>
<feature type="repeat" description="LRR 20">
    <location>
        <begin position="894"/>
        <end position="914"/>
    </location>
</feature>
<feature type="repeat" description="LRR 21">
    <location>
        <begin position="915"/>
        <end position="937"/>
    </location>
</feature>
<feature type="repeat" description="LRR 22">
    <location>
        <begin position="949"/>
        <end position="973"/>
    </location>
</feature>
<sequence length="990" mass="108899">MRIWCFSCFTDEDEDEEDDNGGRVKKQSLATAMDNSNGDGDFVNFGENERAPRVPRWRLRLCAEESEAAWAELDRFWTSEIPLNQLVQGESSSNVVAEAEDCTMEEADHDSYHKRAKVYSGLAECRSVSGVSSDAGNSVSSVERTVSFGIASSSRTDTDMFCQNFILNYNRKDGKKDDGDDNGSSDTEDFEVHIDLTDDLLHMVFSFLNHVDLCRSAMVCRQWRVASAHEDFWRVLNFENIRISMEQFENMCSRYPNATEVNVYGAPAVNALAMKAATTLRNLEVLTIGKGHISESFFQALGECNMLRSVTVSDAILGNGAQEIHLSHDRLRELKITKCRVMRLSIRCPQLRSLSLKRSNMSQAMLNCPLLQLLDIASCHKLLDAAIRSAAISCPQLESLDVSNCSCVSDETLREIAQACANLHILNASYCPNISLESVHLPMLTVLKLHSCEGITSASMTWIANSPALEVLELDNCNLLTTVSLHLSRLQSISLVHCRKFTDLNLQSIMLSSITVSNCPALRRITITSNALRRLALQKQENLTTLVLQCHSLQEVDLSDCESLSNSVCKIFSDDGGCPMLKSLILDNCESLTAVRFCNSSLASLSLVGCRAVTSLELKCPRIEQICLDGCDHLETAFFQPVALRSLNLGICPKLSVLNIEAPYMVSLELKGCGVLSEASIMCPLLTSLDASFCSQLRDDCLSATTASCPLIESLVLMSCPSIGSDGLSSLNGLPNLTVLDLSYTFLMNLEPVFKSCIQLKVLKLQACKYLTDSSLEPLYKEGALPALEELDLSYGTLCQTAIDDLLACCTHLTHLSLNGCVNMHDLDWGSTSVHLFDYFGVYSSSDNTQEPAETANRLLQNLNCVGCPNIRKVLIPPAARFYHLSTLNLSLSVNLKEVDLTCSNLVLLNLSNCCSLEVLKLGCPRLASLFLQSCNMDEAGVEAAISGCSSLETLDLRFCPKISSVSMSKFRTVCPSLKRVFSSPNLLQD</sequence>
<keyword id="KW-0433">Leucine-rich repeat</keyword>
<keyword id="KW-1185">Reference proteome</keyword>
<keyword id="KW-0677">Repeat</keyword>
<comment type="sequence caution" evidence="2">
    <conflict type="erroneous initiation">
        <sequence resource="EMBL-CDS" id="BAC42533"/>
    </conflict>
</comment>
<comment type="sequence caution" evidence="2">
    <conflict type="erroneous gene model prediction">
        <sequence resource="EMBL-CDS" id="CAB36795"/>
    </conflict>
</comment>
<comment type="sequence caution" evidence="2">
    <conflict type="erroneous gene model prediction">
        <sequence resource="EMBL-CDS" id="CAB80038"/>
    </conflict>
</comment>
<name>FBL15_ARATH</name>